<name>RIMM_NITEU</name>
<dbReference type="EMBL" id="AL954747">
    <property type="protein sequence ID" value="CAD85583.1"/>
    <property type="molecule type" value="Genomic_DNA"/>
</dbReference>
<dbReference type="RefSeq" id="WP_011112229.1">
    <property type="nucleotide sequence ID" value="NC_004757.1"/>
</dbReference>
<dbReference type="SMR" id="Q82U37"/>
<dbReference type="STRING" id="228410.NE1672"/>
<dbReference type="GeneID" id="87104836"/>
<dbReference type="KEGG" id="neu:NE1672"/>
<dbReference type="eggNOG" id="COG0806">
    <property type="taxonomic scope" value="Bacteria"/>
</dbReference>
<dbReference type="HOGENOM" id="CLU_077636_1_0_4"/>
<dbReference type="OrthoDB" id="9783509at2"/>
<dbReference type="PhylomeDB" id="Q82U37"/>
<dbReference type="Proteomes" id="UP000001416">
    <property type="component" value="Chromosome"/>
</dbReference>
<dbReference type="GO" id="GO:0005737">
    <property type="term" value="C:cytoplasm"/>
    <property type="evidence" value="ECO:0007669"/>
    <property type="project" value="UniProtKB-SubCell"/>
</dbReference>
<dbReference type="GO" id="GO:0005840">
    <property type="term" value="C:ribosome"/>
    <property type="evidence" value="ECO:0007669"/>
    <property type="project" value="InterPro"/>
</dbReference>
<dbReference type="GO" id="GO:0043022">
    <property type="term" value="F:ribosome binding"/>
    <property type="evidence" value="ECO:0007669"/>
    <property type="project" value="InterPro"/>
</dbReference>
<dbReference type="GO" id="GO:0042274">
    <property type="term" value="P:ribosomal small subunit biogenesis"/>
    <property type="evidence" value="ECO:0007669"/>
    <property type="project" value="UniProtKB-UniRule"/>
</dbReference>
<dbReference type="GO" id="GO:0006364">
    <property type="term" value="P:rRNA processing"/>
    <property type="evidence" value="ECO:0007669"/>
    <property type="project" value="UniProtKB-UniRule"/>
</dbReference>
<dbReference type="Gene3D" id="2.30.30.240">
    <property type="entry name" value="PRC-barrel domain"/>
    <property type="match status" value="1"/>
</dbReference>
<dbReference type="Gene3D" id="2.40.30.60">
    <property type="entry name" value="RimM"/>
    <property type="match status" value="1"/>
</dbReference>
<dbReference type="HAMAP" id="MF_00014">
    <property type="entry name" value="Ribosome_mat_RimM"/>
    <property type="match status" value="1"/>
</dbReference>
<dbReference type="InterPro" id="IPR011033">
    <property type="entry name" value="PRC_barrel-like_sf"/>
</dbReference>
<dbReference type="InterPro" id="IPR056792">
    <property type="entry name" value="PRC_RimM"/>
</dbReference>
<dbReference type="InterPro" id="IPR011961">
    <property type="entry name" value="RimM"/>
</dbReference>
<dbReference type="InterPro" id="IPR002676">
    <property type="entry name" value="RimM_N"/>
</dbReference>
<dbReference type="InterPro" id="IPR036976">
    <property type="entry name" value="RimM_N_sf"/>
</dbReference>
<dbReference type="InterPro" id="IPR009000">
    <property type="entry name" value="Transl_B-barrel_sf"/>
</dbReference>
<dbReference type="NCBIfam" id="TIGR02273">
    <property type="entry name" value="16S_RimM"/>
    <property type="match status" value="1"/>
</dbReference>
<dbReference type="PANTHER" id="PTHR33692">
    <property type="entry name" value="RIBOSOME MATURATION FACTOR RIMM"/>
    <property type="match status" value="1"/>
</dbReference>
<dbReference type="PANTHER" id="PTHR33692:SF1">
    <property type="entry name" value="RIBOSOME MATURATION FACTOR RIMM"/>
    <property type="match status" value="1"/>
</dbReference>
<dbReference type="Pfam" id="PF24986">
    <property type="entry name" value="PRC_RimM"/>
    <property type="match status" value="1"/>
</dbReference>
<dbReference type="Pfam" id="PF01782">
    <property type="entry name" value="RimM"/>
    <property type="match status" value="1"/>
</dbReference>
<dbReference type="SUPFAM" id="SSF50346">
    <property type="entry name" value="PRC-barrel domain"/>
    <property type="match status" value="1"/>
</dbReference>
<dbReference type="SUPFAM" id="SSF50447">
    <property type="entry name" value="Translation proteins"/>
    <property type="match status" value="1"/>
</dbReference>
<protein>
    <recommendedName>
        <fullName evidence="1">Ribosome maturation factor RimM</fullName>
    </recommendedName>
</protein>
<organism>
    <name type="scientific">Nitrosomonas europaea (strain ATCC 19718 / CIP 103999 / KCTC 2705 / NBRC 14298)</name>
    <dbReference type="NCBI Taxonomy" id="228410"/>
    <lineage>
        <taxon>Bacteria</taxon>
        <taxon>Pseudomonadati</taxon>
        <taxon>Pseudomonadota</taxon>
        <taxon>Betaproteobacteria</taxon>
        <taxon>Nitrosomonadales</taxon>
        <taxon>Nitrosomonadaceae</taxon>
        <taxon>Nitrosomonas</taxon>
    </lineage>
</organism>
<feature type="chain" id="PRO_0000163324" description="Ribosome maturation factor RimM">
    <location>
        <begin position="1"/>
        <end position="169"/>
    </location>
</feature>
<feature type="domain" description="PRC barrel" evidence="1">
    <location>
        <begin position="95"/>
        <end position="169"/>
    </location>
</feature>
<reference key="1">
    <citation type="journal article" date="2003" name="J. Bacteriol.">
        <title>Complete genome sequence of the ammonia-oxidizing bacterium and obligate chemolithoautotroph Nitrosomonas europaea.</title>
        <authorList>
            <person name="Chain P."/>
            <person name="Lamerdin J.E."/>
            <person name="Larimer F.W."/>
            <person name="Regala W."/>
            <person name="Lao V."/>
            <person name="Land M.L."/>
            <person name="Hauser L."/>
            <person name="Hooper A.B."/>
            <person name="Klotz M.G."/>
            <person name="Norton J."/>
            <person name="Sayavedra-Soto L.A."/>
            <person name="Arciero D.M."/>
            <person name="Hommes N.G."/>
            <person name="Whittaker M.M."/>
            <person name="Arp D.J."/>
        </authorList>
    </citation>
    <scope>NUCLEOTIDE SEQUENCE [LARGE SCALE GENOMIC DNA]</scope>
    <source>
        <strain>ATCC 19718 / CIP 103999 / KCTC 2705 / NBRC 14298</strain>
    </source>
</reference>
<accession>Q82U37</accession>
<keyword id="KW-0143">Chaperone</keyword>
<keyword id="KW-0963">Cytoplasm</keyword>
<keyword id="KW-1185">Reference proteome</keyword>
<keyword id="KW-0690">Ribosome biogenesis</keyword>
<keyword id="KW-0698">rRNA processing</keyword>
<proteinExistence type="inferred from homology"/>
<comment type="function">
    <text evidence="1">An accessory protein needed during the final step in the assembly of 30S ribosomal subunit, possibly for assembly of the head region. Essential for efficient processing of 16S rRNA. May be needed both before and after RbfA during the maturation of 16S rRNA. It has affinity for free ribosomal 30S subunits but not for 70S ribosomes.</text>
</comment>
<comment type="subunit">
    <text evidence="1">Binds ribosomal protein uS19.</text>
</comment>
<comment type="subcellular location">
    <subcellularLocation>
        <location evidence="1">Cytoplasm</location>
    </subcellularLocation>
</comment>
<comment type="domain">
    <text evidence="1">The PRC barrel domain binds ribosomal protein uS19.</text>
</comment>
<comment type="similarity">
    <text evidence="1">Belongs to the RimM family.</text>
</comment>
<gene>
    <name evidence="1" type="primary">rimM</name>
    <name type="ordered locus">NE1672</name>
</gene>
<sequence length="169" mass="18851">MVVLGRIAGPHGIRGQIKVIPFTEYVDGLMEYPVWCLSRDEKNWQIVRPATFFIHDNLLIVTLTGYSDRTSASELKGLLVAVPRSQLPPLSKDGEDGYYWTDLIGISVVNMQGEPLGTVAGLFETGANDVLRVRLSGSSKDELIPFVDQVIRQVDLESRQITVDWELGY</sequence>
<evidence type="ECO:0000255" key="1">
    <source>
        <dbReference type="HAMAP-Rule" id="MF_00014"/>
    </source>
</evidence>